<keyword id="KW-0067">ATP-binding</keyword>
<keyword id="KW-0106">Calcium</keyword>
<keyword id="KW-0107">Calcium channel</keyword>
<keyword id="KW-0109">Calcium transport</keyword>
<keyword id="KW-0112">Calmodulin-binding</keyword>
<keyword id="KW-0217">Developmental protein</keyword>
<keyword id="KW-0407">Ion channel</keyword>
<keyword id="KW-0406">Ion transport</keyword>
<keyword id="KW-1071">Ligand-gated ion channel</keyword>
<keyword id="KW-0472">Membrane</keyword>
<keyword id="KW-0479">Metal-binding</keyword>
<keyword id="KW-0547">Nucleotide-binding</keyword>
<keyword id="KW-0597">Phosphoprotein</keyword>
<keyword id="KW-0675">Receptor</keyword>
<keyword id="KW-1185">Reference proteome</keyword>
<keyword id="KW-0677">Repeat</keyword>
<keyword id="KW-0702">S-nitrosylation</keyword>
<keyword id="KW-0703">Sarcoplasmic reticulum</keyword>
<keyword id="KW-0812">Transmembrane</keyword>
<keyword id="KW-1133">Transmembrane helix</keyword>
<keyword id="KW-0813">Transport</keyword>
<accession>F1LMY4</accession>
<accession>O35208</accession>
<accession>Q9R1G1</accession>
<accession>Q9R272</accession>
<evidence type="ECO:0000250" key="1"/>
<evidence type="ECO:0000250" key="2">
    <source>
        <dbReference type="UniProtKB" id="E9PZQ0"/>
    </source>
</evidence>
<evidence type="ECO:0000250" key="3">
    <source>
        <dbReference type="UniProtKB" id="P11716"/>
    </source>
</evidence>
<evidence type="ECO:0000250" key="4">
    <source>
        <dbReference type="UniProtKB" id="P21817"/>
    </source>
</evidence>
<evidence type="ECO:0000255" key="5">
    <source>
        <dbReference type="PROSITE-ProRule" id="PRU00131"/>
    </source>
</evidence>
<evidence type="ECO:0000255" key="6">
    <source>
        <dbReference type="PROSITE-ProRule" id="PRU00448"/>
    </source>
</evidence>
<evidence type="ECO:0000255" key="7">
    <source>
        <dbReference type="PROSITE-ProRule" id="PRU00548"/>
    </source>
</evidence>
<evidence type="ECO:0000256" key="8">
    <source>
        <dbReference type="SAM" id="MobiDB-lite"/>
    </source>
</evidence>
<evidence type="ECO:0000269" key="9">
    <source>
    </source>
</evidence>
<evidence type="ECO:0000269" key="10">
    <source>
    </source>
</evidence>
<evidence type="ECO:0000305" key="11"/>
<evidence type="ECO:0000305" key="12">
    <source>
    </source>
</evidence>
<evidence type="ECO:0000312" key="13">
    <source>
        <dbReference type="RGD" id="1586637"/>
    </source>
</evidence>
<evidence type="ECO:0007744" key="14">
    <source>
    </source>
</evidence>
<evidence type="ECO:0007744" key="15">
    <source>
    </source>
</evidence>
<dbReference type="EMBL" id="AF112256">
    <property type="protein sequence ID" value="AAD48899.1"/>
    <property type="molecule type" value="mRNA"/>
</dbReference>
<dbReference type="EMBL" id="AF130879">
    <property type="protein sequence ID" value="AAD31270.1"/>
    <property type="molecule type" value="mRNA"/>
</dbReference>
<dbReference type="EMBL" id="AF011788">
    <property type="protein sequence ID" value="AAB65756.1"/>
    <property type="molecule type" value="mRNA"/>
</dbReference>
<dbReference type="SMR" id="F1LMY4"/>
<dbReference type="CORUM" id="F1LMY4"/>
<dbReference type="FunCoup" id="F1LMY4">
    <property type="interactions" value="743"/>
</dbReference>
<dbReference type="IntAct" id="F1LMY4">
    <property type="interactions" value="3"/>
</dbReference>
<dbReference type="MINT" id="F1LMY4"/>
<dbReference type="STRING" id="10116.ENSRNOP00000073446"/>
<dbReference type="CarbonylDB" id="F1LMY4"/>
<dbReference type="GlyGen" id="F1LMY4">
    <property type="glycosylation" value="3 sites"/>
</dbReference>
<dbReference type="iPTMnet" id="F1LMY4"/>
<dbReference type="PhosphoSitePlus" id="F1LMY4"/>
<dbReference type="PaxDb" id="10116-ENSRNOP00000027893"/>
<dbReference type="UCSC" id="RGD:620313">
    <property type="organism name" value="rat"/>
</dbReference>
<dbReference type="AGR" id="RGD:1586637"/>
<dbReference type="RGD" id="1586637">
    <property type="gene designation" value="Ryr1"/>
</dbReference>
<dbReference type="eggNOG" id="KOG2243">
    <property type="taxonomic scope" value="Eukaryota"/>
</dbReference>
<dbReference type="InParanoid" id="F1LMY4"/>
<dbReference type="TreeFam" id="TF315244"/>
<dbReference type="Reactome" id="R-RNO-2672351">
    <property type="pathway name" value="Stimuli-sensing channels"/>
</dbReference>
<dbReference type="Reactome" id="R-RNO-5578775">
    <property type="pathway name" value="Ion homeostasis"/>
</dbReference>
<dbReference type="PRO" id="PR:F1LMY4"/>
<dbReference type="Proteomes" id="UP000002494">
    <property type="component" value="Unplaced"/>
</dbReference>
<dbReference type="GO" id="GO:0034704">
    <property type="term" value="C:calcium channel complex"/>
    <property type="evidence" value="ECO:0000318"/>
    <property type="project" value="GO_Central"/>
</dbReference>
<dbReference type="GO" id="GO:0005938">
    <property type="term" value="C:cell cortex"/>
    <property type="evidence" value="ECO:0000266"/>
    <property type="project" value="RGD"/>
</dbReference>
<dbReference type="GO" id="GO:0005737">
    <property type="term" value="C:cytoplasm"/>
    <property type="evidence" value="ECO:0000314"/>
    <property type="project" value="RGD"/>
</dbReference>
<dbReference type="GO" id="GO:0009898">
    <property type="term" value="C:cytoplasmic side of plasma membrane"/>
    <property type="evidence" value="ECO:0000314"/>
    <property type="project" value="RGD"/>
</dbReference>
<dbReference type="GO" id="GO:0031234">
    <property type="term" value="C:extrinsic component of cytoplasmic side of plasma membrane"/>
    <property type="evidence" value="ECO:0000314"/>
    <property type="project" value="RGD"/>
</dbReference>
<dbReference type="GO" id="GO:0031674">
    <property type="term" value="C:I band"/>
    <property type="evidence" value="ECO:0000266"/>
    <property type="project" value="RGD"/>
</dbReference>
<dbReference type="GO" id="GO:0030314">
    <property type="term" value="C:junctional membrane complex"/>
    <property type="evidence" value="ECO:0000266"/>
    <property type="project" value="RGD"/>
</dbReference>
<dbReference type="GO" id="GO:0016020">
    <property type="term" value="C:membrane"/>
    <property type="evidence" value="ECO:0000266"/>
    <property type="project" value="RGD"/>
</dbReference>
<dbReference type="GO" id="GO:0031090">
    <property type="term" value="C:organelle membrane"/>
    <property type="evidence" value="ECO:0000250"/>
    <property type="project" value="UniProtKB"/>
</dbReference>
<dbReference type="GO" id="GO:0048471">
    <property type="term" value="C:perinuclear region of cytoplasm"/>
    <property type="evidence" value="ECO:0000314"/>
    <property type="project" value="RGD"/>
</dbReference>
<dbReference type="GO" id="GO:0005886">
    <property type="term" value="C:plasma membrane"/>
    <property type="evidence" value="ECO:0000266"/>
    <property type="project" value="RGD"/>
</dbReference>
<dbReference type="GO" id="GO:0032991">
    <property type="term" value="C:protein-containing complex"/>
    <property type="evidence" value="ECO:0000266"/>
    <property type="project" value="RGD"/>
</dbReference>
<dbReference type="GO" id="GO:1990425">
    <property type="term" value="C:ryanodine receptor complex"/>
    <property type="evidence" value="ECO:0000250"/>
    <property type="project" value="UniProtKB"/>
</dbReference>
<dbReference type="GO" id="GO:0042383">
    <property type="term" value="C:sarcolemma"/>
    <property type="evidence" value="ECO:0000314"/>
    <property type="project" value="RGD"/>
</dbReference>
<dbReference type="GO" id="GO:0030017">
    <property type="term" value="C:sarcomere"/>
    <property type="evidence" value="ECO:0000314"/>
    <property type="project" value="RGD"/>
</dbReference>
<dbReference type="GO" id="GO:0016529">
    <property type="term" value="C:sarcoplasmic reticulum"/>
    <property type="evidence" value="ECO:0000314"/>
    <property type="project" value="RGD"/>
</dbReference>
<dbReference type="GO" id="GO:0033017">
    <property type="term" value="C:sarcoplasmic reticulum membrane"/>
    <property type="evidence" value="ECO:0000314"/>
    <property type="project" value="UniProtKB"/>
</dbReference>
<dbReference type="GO" id="GO:0005790">
    <property type="term" value="C:smooth endoplasmic reticulum"/>
    <property type="evidence" value="ECO:0000266"/>
    <property type="project" value="RGD"/>
</dbReference>
<dbReference type="GO" id="GO:0030315">
    <property type="term" value="C:T-tubule"/>
    <property type="evidence" value="ECO:0000266"/>
    <property type="project" value="RGD"/>
</dbReference>
<dbReference type="GO" id="GO:0014802">
    <property type="term" value="C:terminal cisterna"/>
    <property type="evidence" value="ECO:0000314"/>
    <property type="project" value="UniProtKB"/>
</dbReference>
<dbReference type="GO" id="GO:0031982">
    <property type="term" value="C:vesicle"/>
    <property type="evidence" value="ECO:0000314"/>
    <property type="project" value="RGD"/>
</dbReference>
<dbReference type="GO" id="GO:0030018">
    <property type="term" value="C:Z disc"/>
    <property type="evidence" value="ECO:0000318"/>
    <property type="project" value="GO_Central"/>
</dbReference>
<dbReference type="GO" id="GO:0005524">
    <property type="term" value="F:ATP binding"/>
    <property type="evidence" value="ECO:0000250"/>
    <property type="project" value="UniProtKB"/>
</dbReference>
<dbReference type="GO" id="GO:0005262">
    <property type="term" value="F:calcium channel activity"/>
    <property type="evidence" value="ECO:0000250"/>
    <property type="project" value="UniProtKB"/>
</dbReference>
<dbReference type="GO" id="GO:0005509">
    <property type="term" value="F:calcium ion binding"/>
    <property type="evidence" value="ECO:0000250"/>
    <property type="project" value="UniProtKB"/>
</dbReference>
<dbReference type="GO" id="GO:0048763">
    <property type="term" value="F:calcium-induced calcium release activity"/>
    <property type="evidence" value="ECO:0000266"/>
    <property type="project" value="RGD"/>
</dbReference>
<dbReference type="GO" id="GO:0005516">
    <property type="term" value="F:calmodulin binding"/>
    <property type="evidence" value="ECO:0007669"/>
    <property type="project" value="UniProtKB-KW"/>
</dbReference>
<dbReference type="GO" id="GO:0019899">
    <property type="term" value="F:enzyme binding"/>
    <property type="evidence" value="ECO:0000266"/>
    <property type="project" value="RGD"/>
</dbReference>
<dbReference type="GO" id="GO:0002020">
    <property type="term" value="F:protease binding"/>
    <property type="evidence" value="ECO:0000266"/>
    <property type="project" value="RGD"/>
</dbReference>
<dbReference type="GO" id="GO:0005219">
    <property type="term" value="F:ryanodine-sensitive calcium-release channel activity"/>
    <property type="evidence" value="ECO:0000314"/>
    <property type="project" value="UniProtKB"/>
</dbReference>
<dbReference type="GO" id="GO:0005245">
    <property type="term" value="F:voltage-gated calcium channel activity"/>
    <property type="evidence" value="ECO:0000250"/>
    <property type="project" value="UniProtKB"/>
</dbReference>
<dbReference type="GO" id="GO:0006816">
    <property type="term" value="P:calcium ion transport"/>
    <property type="evidence" value="ECO:0000314"/>
    <property type="project" value="BHF-UCL"/>
</dbReference>
<dbReference type="GO" id="GO:0071318">
    <property type="term" value="P:cellular response to ATP"/>
    <property type="evidence" value="ECO:0000314"/>
    <property type="project" value="UniProtKB"/>
</dbReference>
<dbReference type="GO" id="GO:0071313">
    <property type="term" value="P:cellular response to caffeine"/>
    <property type="evidence" value="ECO:0000250"/>
    <property type="project" value="UniProtKB"/>
</dbReference>
<dbReference type="GO" id="GO:0071277">
    <property type="term" value="P:cellular response to calcium ion"/>
    <property type="evidence" value="ECO:0000250"/>
    <property type="project" value="UniProtKB"/>
</dbReference>
<dbReference type="GO" id="GO:0006936">
    <property type="term" value="P:muscle contraction"/>
    <property type="evidence" value="ECO:0000250"/>
    <property type="project" value="UniProtKB"/>
</dbReference>
<dbReference type="GO" id="GO:0030512">
    <property type="term" value="P:negative regulation of transforming growth factor beta receptor signaling pathway"/>
    <property type="evidence" value="ECO:0000315"/>
    <property type="project" value="RGD"/>
</dbReference>
<dbReference type="GO" id="GO:0043931">
    <property type="term" value="P:ossification involved in bone maturation"/>
    <property type="evidence" value="ECO:0000250"/>
    <property type="project" value="UniProtKB"/>
</dbReference>
<dbReference type="GO" id="GO:0003151">
    <property type="term" value="P:outflow tract morphogenesis"/>
    <property type="evidence" value="ECO:0000250"/>
    <property type="project" value="UniProtKB"/>
</dbReference>
<dbReference type="GO" id="GO:0051289">
    <property type="term" value="P:protein homotetramerization"/>
    <property type="evidence" value="ECO:0000250"/>
    <property type="project" value="UniProtKB"/>
</dbReference>
<dbReference type="GO" id="GO:0051480">
    <property type="term" value="P:regulation of cytosolic calcium ion concentration"/>
    <property type="evidence" value="ECO:0000314"/>
    <property type="project" value="BHF-UCL"/>
</dbReference>
<dbReference type="GO" id="GO:0047484">
    <property type="term" value="P:regulation of response to osmotic stress"/>
    <property type="evidence" value="ECO:0000315"/>
    <property type="project" value="RGD"/>
</dbReference>
<dbReference type="GO" id="GO:0051209">
    <property type="term" value="P:release of sequestered calcium ion into cytosol"/>
    <property type="evidence" value="ECO:0000314"/>
    <property type="project" value="BHF-UCL"/>
</dbReference>
<dbReference type="GO" id="GO:0014808">
    <property type="term" value="P:release of sequestered calcium ion into cytosol by sarcoplasmic reticulum"/>
    <property type="evidence" value="ECO:0000314"/>
    <property type="project" value="UniProtKB"/>
</dbReference>
<dbReference type="GO" id="GO:0031000">
    <property type="term" value="P:response to caffeine"/>
    <property type="evidence" value="ECO:0000314"/>
    <property type="project" value="BHF-UCL"/>
</dbReference>
<dbReference type="GO" id="GO:0061771">
    <property type="term" value="P:response to caloric restriction"/>
    <property type="evidence" value="ECO:0000270"/>
    <property type="project" value="RGD"/>
</dbReference>
<dbReference type="GO" id="GO:0051602">
    <property type="term" value="P:response to electrical stimulus"/>
    <property type="evidence" value="ECO:0000270"/>
    <property type="project" value="RGD"/>
</dbReference>
<dbReference type="GO" id="GO:0032355">
    <property type="term" value="P:response to estradiol"/>
    <property type="evidence" value="ECO:0000270"/>
    <property type="project" value="RGD"/>
</dbReference>
<dbReference type="GO" id="GO:0001666">
    <property type="term" value="P:response to hypoxia"/>
    <property type="evidence" value="ECO:0000270"/>
    <property type="project" value="RGD"/>
</dbReference>
<dbReference type="GO" id="GO:0014850">
    <property type="term" value="P:response to muscle activity"/>
    <property type="evidence" value="ECO:0000270"/>
    <property type="project" value="RGD"/>
</dbReference>
<dbReference type="GO" id="GO:0070296">
    <property type="term" value="P:sarcoplasmic reticulum calcium ion transport"/>
    <property type="evidence" value="ECO:0000314"/>
    <property type="project" value="RGD"/>
</dbReference>
<dbReference type="GO" id="GO:0003009">
    <property type="term" value="P:skeletal muscle contraction"/>
    <property type="evidence" value="ECO:0000270"/>
    <property type="project" value="RGD"/>
</dbReference>
<dbReference type="GO" id="GO:0048741">
    <property type="term" value="P:skeletal muscle fiber development"/>
    <property type="evidence" value="ECO:0000250"/>
    <property type="project" value="UniProtKB"/>
</dbReference>
<dbReference type="GO" id="GO:0043588">
    <property type="term" value="P:skin development"/>
    <property type="evidence" value="ECO:0000250"/>
    <property type="project" value="UniProtKB"/>
</dbReference>
<dbReference type="CDD" id="cd23290">
    <property type="entry name" value="beta-trefoil_MIR_RyR1"/>
    <property type="match status" value="1"/>
</dbReference>
<dbReference type="CDD" id="cd12877">
    <property type="entry name" value="SPRY1_RyR"/>
    <property type="match status" value="1"/>
</dbReference>
<dbReference type="CDD" id="cd12878">
    <property type="entry name" value="SPRY2_RyR"/>
    <property type="match status" value="1"/>
</dbReference>
<dbReference type="CDD" id="cd12879">
    <property type="entry name" value="SPRY3_RyR"/>
    <property type="match status" value="1"/>
</dbReference>
<dbReference type="FunFam" id="1.10.490.160:FF:000008">
    <property type="match status" value="1"/>
</dbReference>
<dbReference type="FunFam" id="2.60.120.920:FF:000019">
    <property type="entry name" value="Ryanodine receptor 1 (skeletal)"/>
    <property type="match status" value="1"/>
</dbReference>
<dbReference type="FunFam" id="2.80.10.50:FF:000009">
    <property type="entry name" value="Ryanodine receptor 1 (skeletal)"/>
    <property type="match status" value="1"/>
</dbReference>
<dbReference type="FunFam" id="1.10.490.160:FF:000001">
    <property type="entry name" value="Ryanodine receptor 2 (Cardiac)"/>
    <property type="match status" value="1"/>
</dbReference>
<dbReference type="FunFam" id="2.80.10.50:FF:000006">
    <property type="entry name" value="Ryanodine receptor 2 (Cardiac)"/>
    <property type="match status" value="1"/>
</dbReference>
<dbReference type="FunFam" id="1.10.287.70:FF:000017">
    <property type="entry name" value="ryanodine receptor isoform X2"/>
    <property type="match status" value="1"/>
</dbReference>
<dbReference type="FunFam" id="1.25.10.30:FF:000002">
    <property type="entry name" value="ryanodine receptor isoform X2"/>
    <property type="match status" value="1"/>
</dbReference>
<dbReference type="FunFam" id="2.60.120.920:FF:000002">
    <property type="entry name" value="ryanodine receptor isoform X2"/>
    <property type="match status" value="1"/>
</dbReference>
<dbReference type="FunFam" id="2.60.120.920:FF:000003">
    <property type="entry name" value="ryanodine receptor isoform X2"/>
    <property type="match status" value="1"/>
</dbReference>
<dbReference type="Gene3D" id="1.10.287.70">
    <property type="match status" value="1"/>
</dbReference>
<dbReference type="Gene3D" id="1.10.490.160">
    <property type="match status" value="2"/>
</dbReference>
<dbReference type="Gene3D" id="2.60.120.920">
    <property type="match status" value="3"/>
</dbReference>
<dbReference type="Gene3D" id="2.80.10.50">
    <property type="match status" value="2"/>
</dbReference>
<dbReference type="Gene3D" id="6.20.350.10">
    <property type="match status" value="1"/>
</dbReference>
<dbReference type="Gene3D" id="1.25.10.30">
    <property type="entry name" value="IP3 receptor type 1 binding core, RIH domain"/>
    <property type="match status" value="1"/>
</dbReference>
<dbReference type="InterPro" id="IPR001870">
    <property type="entry name" value="B30.2/SPRY"/>
</dbReference>
<dbReference type="InterPro" id="IPR043136">
    <property type="entry name" value="B30.2/SPRY_sf"/>
</dbReference>
<dbReference type="InterPro" id="IPR013320">
    <property type="entry name" value="ConA-like_dom_sf"/>
</dbReference>
<dbReference type="InterPro" id="IPR011992">
    <property type="entry name" value="EF-hand-dom_pair"/>
</dbReference>
<dbReference type="InterPro" id="IPR014821">
    <property type="entry name" value="Ins145_P3_rcpt"/>
</dbReference>
<dbReference type="InterPro" id="IPR005821">
    <property type="entry name" value="Ion_trans_dom"/>
</dbReference>
<dbReference type="InterPro" id="IPR036300">
    <property type="entry name" value="MIR_dom_sf"/>
</dbReference>
<dbReference type="InterPro" id="IPR016093">
    <property type="entry name" value="MIR_motif"/>
</dbReference>
<dbReference type="InterPro" id="IPR013662">
    <property type="entry name" value="RIH_assoc-dom"/>
</dbReference>
<dbReference type="InterPro" id="IPR000699">
    <property type="entry name" value="RIH_dom"/>
</dbReference>
<dbReference type="InterPro" id="IPR013333">
    <property type="entry name" value="Ryan_recept"/>
</dbReference>
<dbReference type="InterPro" id="IPR015925">
    <property type="entry name" value="Ryanodine_IP3_receptor"/>
</dbReference>
<dbReference type="InterPro" id="IPR003032">
    <property type="entry name" value="Ryanodine_rcpt"/>
</dbReference>
<dbReference type="InterPro" id="IPR009460">
    <property type="entry name" value="Ryanrecept_TM4-6"/>
</dbReference>
<dbReference type="InterPro" id="IPR048581">
    <property type="entry name" value="RYDR_Jsol"/>
</dbReference>
<dbReference type="InterPro" id="IPR035910">
    <property type="entry name" value="RyR/IP3R_RIH_dom_sf"/>
</dbReference>
<dbReference type="InterPro" id="IPR035761">
    <property type="entry name" value="SPRY1_RyR"/>
</dbReference>
<dbReference type="InterPro" id="IPR035764">
    <property type="entry name" value="SPRY2_RyR"/>
</dbReference>
<dbReference type="InterPro" id="IPR035762">
    <property type="entry name" value="SPRY3_RyR"/>
</dbReference>
<dbReference type="InterPro" id="IPR003877">
    <property type="entry name" value="SPRY_dom"/>
</dbReference>
<dbReference type="PANTHER" id="PTHR46399">
    <property type="entry name" value="B30.2/SPRY DOMAIN-CONTAINING PROTEIN"/>
    <property type="match status" value="1"/>
</dbReference>
<dbReference type="PANTHER" id="PTHR46399:SF10">
    <property type="entry name" value="RYANODINE RECEPTOR 1"/>
    <property type="match status" value="1"/>
</dbReference>
<dbReference type="Pfam" id="PF08709">
    <property type="entry name" value="Ins145_P3_rec"/>
    <property type="match status" value="1"/>
</dbReference>
<dbReference type="Pfam" id="PF00520">
    <property type="entry name" value="Ion_trans"/>
    <property type="match status" value="1"/>
</dbReference>
<dbReference type="Pfam" id="PF02815">
    <property type="entry name" value="MIR"/>
    <property type="match status" value="1"/>
</dbReference>
<dbReference type="Pfam" id="PF08454">
    <property type="entry name" value="RIH_assoc"/>
    <property type="match status" value="1"/>
</dbReference>
<dbReference type="Pfam" id="PF06459">
    <property type="entry name" value="RR_TM4-6"/>
    <property type="match status" value="1"/>
</dbReference>
<dbReference type="Pfam" id="PF01365">
    <property type="entry name" value="RYDR_ITPR"/>
    <property type="match status" value="2"/>
</dbReference>
<dbReference type="Pfam" id="PF21119">
    <property type="entry name" value="RYDR_Jsol"/>
    <property type="match status" value="1"/>
</dbReference>
<dbReference type="Pfam" id="PF02026">
    <property type="entry name" value="RyR"/>
    <property type="match status" value="4"/>
</dbReference>
<dbReference type="Pfam" id="PF00622">
    <property type="entry name" value="SPRY"/>
    <property type="match status" value="3"/>
</dbReference>
<dbReference type="PRINTS" id="PR00795">
    <property type="entry name" value="RYANODINER"/>
</dbReference>
<dbReference type="SMART" id="SM00472">
    <property type="entry name" value="MIR"/>
    <property type="match status" value="4"/>
</dbReference>
<dbReference type="SMART" id="SM00449">
    <property type="entry name" value="SPRY"/>
    <property type="match status" value="3"/>
</dbReference>
<dbReference type="SUPFAM" id="SSF49899">
    <property type="entry name" value="Concanavalin A-like lectins/glucanases"/>
    <property type="match status" value="3"/>
</dbReference>
<dbReference type="SUPFAM" id="SSF47473">
    <property type="entry name" value="EF-hand"/>
    <property type="match status" value="1"/>
</dbReference>
<dbReference type="SUPFAM" id="SSF100909">
    <property type="entry name" value="IP3 receptor type 1 binding core, domain 2"/>
    <property type="match status" value="2"/>
</dbReference>
<dbReference type="SUPFAM" id="SSF82109">
    <property type="entry name" value="MIR domain"/>
    <property type="match status" value="2"/>
</dbReference>
<dbReference type="PROSITE" id="PS50188">
    <property type="entry name" value="B302_SPRY"/>
    <property type="match status" value="3"/>
</dbReference>
<dbReference type="PROSITE" id="PS50919">
    <property type="entry name" value="MIR"/>
    <property type="match status" value="5"/>
</dbReference>
<organism>
    <name type="scientific">Rattus norvegicus</name>
    <name type="common">Rat</name>
    <dbReference type="NCBI Taxonomy" id="10116"/>
    <lineage>
        <taxon>Eukaryota</taxon>
        <taxon>Metazoa</taxon>
        <taxon>Chordata</taxon>
        <taxon>Craniata</taxon>
        <taxon>Vertebrata</taxon>
        <taxon>Euteleostomi</taxon>
        <taxon>Mammalia</taxon>
        <taxon>Eutheria</taxon>
        <taxon>Euarchontoglires</taxon>
        <taxon>Glires</taxon>
        <taxon>Rodentia</taxon>
        <taxon>Myomorpha</taxon>
        <taxon>Muroidea</taxon>
        <taxon>Muridae</taxon>
        <taxon>Murinae</taxon>
        <taxon>Rattus</taxon>
    </lineage>
</organism>
<comment type="function">
    <text evidence="2 3 12">Cytosolic calcium-activated calcium channel that mediates the release of Ca(2+) from the sarcoplasmic reticulum into the cytosol and thereby plays a key role in triggering muscle contraction following depolarization of T-tubules (PubMed:11316255). Repeated very high-level exercise increases the open probability of the channel and leads to Ca(2+) leaking into the cytoplasm (By similarity). Can also mediate the release of Ca(2+) from intracellular stores in neurons, and may thereby promote prolonged Ca(2+) signaling in the brain. Required for normal embryonic development of muscle fibers and skeletal muscle. Required for normal heart morphogenesis, skin development and ossification during embryogenesis (By similarity).</text>
</comment>
<comment type="catalytic activity">
    <reaction evidence="10">
        <text>Ca(2+)(in) = Ca(2+)(out)</text>
        <dbReference type="Rhea" id="RHEA:29671"/>
        <dbReference type="ChEBI" id="CHEBI:29108"/>
    </reaction>
</comment>
<comment type="activity regulation">
    <text evidence="3 10">The calcium release is activated by increased cytosolic calcium levels, by nitric oxyde (NO), caffeine and ATP (PubMed:11316255). Channel activity is modulated by the alkaloid ryanodine that binds to the open Ca-release channel with high affinity. At low concentrations, ryanodine maintains the channel in an open conformation. High ryanodine concentrations inhibit channel activity. Channel activity is regulated by calmodulin (CALM) (By similarity). Channel activity is inhibited by magnesium ions, possibly by competition for calcium binding sites (PubMed:11316255).</text>
</comment>
<comment type="subunit">
    <text evidence="2 3 4">Homotetramer. Can also form heterotetramers with RYR2 (By similarity). Identified in a complex composed of RYR1, PDE4D, PKA, FKBP1A and protein phosphatase 1 (PP1). Repeated very high-level exercise decreases interaction with PDE4D and protein phosphatase 1 (PP1) (By similarity). Interacts with CALM; CALM with bound calcium inhibits the RYR1 channel activity (By similarity). Interacts with S100A1 (By similarity). Interacts with FKBP1A; this stabilizes the closed conformation of the channel. Interacts with CACNA1S; interaction with CACNA1S is important for activation of the RYR1 channel. Interacts with CACNB1. Interacts with TRDN and ASPH; these interactions stimulate RYR1 channel activity. Interacts with SELENON (By similarity). Interacts with scorpion calcins (AC P0DPT1; AC P0DM30; AC A0A1L4BJ42; AC P59868; AC P60254; AC B8QG00; AC L0GBR1; AC P60252; AC P60253) (By similarity).</text>
</comment>
<comment type="subcellular location">
    <subcellularLocation>
        <location evidence="10">Sarcoplasmic reticulum membrane</location>
        <topology evidence="3">Multi-pass membrane protein</topology>
    </subcellularLocation>
    <text evidence="3">The number of predicted transmembrane domains varies between orthologs. Both N-terminus and C-terminus are cytoplasmic.</text>
</comment>
<comment type="tissue specificity">
    <text evidence="9 10">Detected in skeletal muscle (at protein level) (PubMed:11316255). Detected in myometrium smooth muscle (PubMed:10444400).</text>
</comment>
<comment type="domain">
    <text evidence="3">The calcium release channel activity resides in the C-terminal region while the remaining part of the protein constitutes the 'foot' structure spanning the junctional gap between the sarcoplasmic reticulum (SR) and the T-tubule. Pore opening is mediated via the cytoplasmic calcium-binding domains that mediate a small rotation of the channel-forming transmembrane regions that then leads to channel opening.</text>
</comment>
<comment type="PTM">
    <text evidence="4">Channel activity is modulated by phosphorylation. Phosphorylation at Ser-2840 may increase channel activity. Repeated very high-level exercise increases phosphorylation at Ser-2840.</text>
</comment>
<comment type="PTM">
    <text evidence="3 4">Activated by reversible S-nitrosylation (By similarity). Repeated very high-level exercise increases S-nitrosylation (By similarity).</text>
</comment>
<comment type="similarity">
    <text evidence="11">Belongs to the ryanodine receptor (TC 1.A.3.1) family.</text>
</comment>
<proteinExistence type="evidence at protein level"/>
<protein>
    <recommendedName>
        <fullName evidence="12">Ryanodine receptor 1</fullName>
        <shortName>RYR-1</shortName>
        <shortName>RyR1</shortName>
    </recommendedName>
    <alternativeName>
        <fullName>Skeletal muscle calcium release channel</fullName>
    </alternativeName>
    <alternativeName>
        <fullName>Skeletal muscle ryanodine receptor</fullName>
    </alternativeName>
    <alternativeName>
        <fullName>Skeletal muscle-type ryanodine receptor</fullName>
    </alternativeName>
    <alternativeName>
        <fullName>Type 1 ryanodine receptor</fullName>
    </alternativeName>
</protein>
<feature type="chain" id="PRO_0000415567" description="Ryanodine receptor 1">
    <location>
        <begin position="1"/>
        <end position="5035"/>
    </location>
</feature>
<feature type="topological domain" description="Cytoplasmic" evidence="3">
    <location>
        <begin position="1"/>
        <end position="4556"/>
    </location>
</feature>
<feature type="transmembrane region" description="Helical; Name=1" evidence="3">
    <location>
        <begin position="4557"/>
        <end position="4577"/>
    </location>
</feature>
<feature type="topological domain" description="Lumenal" evidence="3">
    <location>
        <begin position="4578"/>
        <end position="4638"/>
    </location>
</feature>
<feature type="transmembrane region" description="Helical; Name=2" evidence="3">
    <location>
        <begin position="4639"/>
        <end position="4659"/>
    </location>
</feature>
<feature type="topological domain" description="Cytoplasmic" evidence="3">
    <location>
        <begin position="4660"/>
        <end position="4777"/>
    </location>
</feature>
<feature type="transmembrane region" description="Helical; Name=3" evidence="3">
    <location>
        <begin position="4778"/>
        <end position="4800"/>
    </location>
</feature>
<feature type="topological domain" description="Lumenal" evidence="3">
    <location>
        <position position="4801"/>
    </location>
</feature>
<feature type="transmembrane region" description="Helical; Name=4" evidence="3">
    <location>
        <begin position="4802"/>
        <end position="4818"/>
    </location>
</feature>
<feature type="topological domain" description="Cytoplasmic" evidence="3">
    <location>
        <begin position="4819"/>
        <end position="4833"/>
    </location>
</feature>
<feature type="transmembrane region" description="Helical; Name=5" evidence="3">
    <location>
        <begin position="4834"/>
        <end position="4854"/>
    </location>
</feature>
<feature type="topological domain" description="Lumenal" evidence="3">
    <location>
        <begin position="4855"/>
        <end position="4877"/>
    </location>
</feature>
<feature type="intramembrane region" description="Pore-forming" evidence="3">
    <location>
        <begin position="4878"/>
        <end position="4897"/>
    </location>
</feature>
<feature type="topological domain" description="Lumenal" evidence="3">
    <location>
        <begin position="4898"/>
        <end position="4917"/>
    </location>
</feature>
<feature type="transmembrane region" description="Helical; Name=6" evidence="3">
    <location>
        <begin position="4918"/>
        <end position="4938"/>
    </location>
</feature>
<feature type="topological domain" description="Cytoplasmic" evidence="3">
    <location>
        <begin position="4939"/>
        <end position="5035"/>
    </location>
</feature>
<feature type="domain" description="MIR 1" evidence="5">
    <location>
        <begin position="99"/>
        <end position="154"/>
    </location>
</feature>
<feature type="domain" description="MIR 2" evidence="5">
    <location>
        <begin position="161"/>
        <end position="206"/>
    </location>
</feature>
<feature type="domain" description="MIR 3" evidence="5">
    <location>
        <begin position="212"/>
        <end position="266"/>
    </location>
</feature>
<feature type="domain" description="MIR 4" evidence="5">
    <location>
        <begin position="272"/>
        <end position="329"/>
    </location>
</feature>
<feature type="domain" description="MIR 5" evidence="5">
    <location>
        <begin position="337"/>
        <end position="394"/>
    </location>
</feature>
<feature type="domain" description="B30.2/SPRY 1" evidence="7">
    <location>
        <begin position="583"/>
        <end position="799"/>
    </location>
</feature>
<feature type="repeat" description="1">
    <location>
        <begin position="843"/>
        <end position="956"/>
    </location>
</feature>
<feature type="repeat" description="2">
    <location>
        <begin position="957"/>
        <end position="1070"/>
    </location>
</feature>
<feature type="domain" description="B30.2/SPRY 2" evidence="7">
    <location>
        <begin position="1015"/>
        <end position="1209"/>
    </location>
</feature>
<feature type="repeat" description="3; truncated">
    <location>
        <begin position="1345"/>
        <end position="1360"/>
    </location>
</feature>
<feature type="domain" description="B30.2/SPRY 3" evidence="7">
    <location>
        <begin position="1358"/>
        <end position="1571"/>
    </location>
</feature>
<feature type="repeat" description="4; truncated">
    <location>
        <begin position="1373"/>
        <end position="1388"/>
    </location>
</feature>
<feature type="repeat" description="5">
    <location>
        <begin position="2723"/>
        <end position="2842"/>
    </location>
</feature>
<feature type="repeat" description="6">
    <location>
        <begin position="2843"/>
        <end position="2956"/>
    </location>
</feature>
<feature type="domain" description="EF-hand" evidence="6">
    <location>
        <begin position="4078"/>
        <end position="4106"/>
    </location>
</feature>
<feature type="region of interest" description="Interaction with FKBP1A" evidence="3">
    <location>
        <begin position="671"/>
        <end position="682"/>
    </location>
</feature>
<feature type="region of interest" description="6 X approximate repeats">
    <location>
        <begin position="843"/>
        <end position="2956"/>
    </location>
</feature>
<feature type="region of interest" description="Disordered" evidence="8">
    <location>
        <begin position="1308"/>
        <end position="1386"/>
    </location>
</feature>
<feature type="region of interest" description="Disordered" evidence="8">
    <location>
        <begin position="1666"/>
        <end position="1685"/>
    </location>
</feature>
<feature type="region of interest" description="Disordered" evidence="8">
    <location>
        <begin position="1870"/>
        <end position="1923"/>
    </location>
</feature>
<feature type="region of interest" description="Disordered" evidence="8">
    <location>
        <begin position="2389"/>
        <end position="2411"/>
    </location>
</feature>
<feature type="region of interest" description="Disordered" evidence="8">
    <location>
        <begin position="2824"/>
        <end position="2855"/>
    </location>
</feature>
<feature type="region of interest" description="Interaction with CALM" evidence="1">
    <location>
        <begin position="3613"/>
        <end position="3642"/>
    </location>
</feature>
<feature type="region of interest" description="Disordered" evidence="8">
    <location>
        <begin position="4255"/>
        <end position="4284"/>
    </location>
</feature>
<feature type="region of interest" description="Disordered" evidence="8">
    <location>
        <begin position="4378"/>
        <end position="4531"/>
    </location>
</feature>
<feature type="region of interest" description="Disordered" evidence="8">
    <location>
        <begin position="4586"/>
        <end position="4618"/>
    </location>
</feature>
<feature type="short sequence motif" description="Selectivity filter" evidence="3">
    <location>
        <begin position="4892"/>
        <end position="4898"/>
    </location>
</feature>
<feature type="compositionally biased region" description="Basic and acidic residues" evidence="8">
    <location>
        <begin position="1373"/>
        <end position="1383"/>
    </location>
</feature>
<feature type="compositionally biased region" description="Acidic residues" evidence="8">
    <location>
        <begin position="4257"/>
        <end position="4274"/>
    </location>
</feature>
<feature type="compositionally biased region" description="Low complexity" evidence="8">
    <location>
        <begin position="4275"/>
        <end position="4284"/>
    </location>
</feature>
<feature type="compositionally biased region" description="Acidic residues" evidence="8">
    <location>
        <begin position="4400"/>
        <end position="4422"/>
    </location>
</feature>
<feature type="compositionally biased region" description="Acidic residues" evidence="8">
    <location>
        <begin position="4478"/>
        <end position="4494"/>
    </location>
</feature>
<feature type="compositionally biased region" description="Basic and acidic residues" evidence="8">
    <location>
        <begin position="4495"/>
        <end position="4509"/>
    </location>
</feature>
<feature type="compositionally biased region" description="Pro residues" evidence="8">
    <location>
        <begin position="4510"/>
        <end position="4524"/>
    </location>
</feature>
<feature type="compositionally biased region" description="Gly residues" evidence="8">
    <location>
        <begin position="4593"/>
        <end position="4609"/>
    </location>
</feature>
<feature type="binding site" evidence="3">
    <location>
        <position position="3896"/>
    </location>
    <ligand>
        <name>Ca(2+)</name>
        <dbReference type="ChEBI" id="CHEBI:29108"/>
    </ligand>
</feature>
<feature type="binding site" evidence="3">
    <location>
        <position position="3970"/>
    </location>
    <ligand>
        <name>Ca(2+)</name>
        <dbReference type="ChEBI" id="CHEBI:29108"/>
    </ligand>
</feature>
<feature type="binding site" evidence="3">
    <location>
        <begin position="4214"/>
        <end position="4218"/>
    </location>
    <ligand>
        <name>ATP</name>
        <dbReference type="ChEBI" id="CHEBI:30616"/>
    </ligand>
</feature>
<feature type="binding site" evidence="3">
    <location>
        <position position="4714"/>
    </location>
    <ligand>
        <name>caffeine</name>
        <dbReference type="ChEBI" id="CHEBI:27732"/>
    </ligand>
</feature>
<feature type="binding site" evidence="3">
    <location>
        <begin position="4952"/>
        <end position="4957"/>
    </location>
    <ligand>
        <name>ATP</name>
        <dbReference type="ChEBI" id="CHEBI:30616"/>
    </ligand>
</feature>
<feature type="binding site" evidence="3">
    <location>
        <begin position="4977"/>
        <end position="4983"/>
    </location>
    <ligand>
        <name>ATP</name>
        <dbReference type="ChEBI" id="CHEBI:30616"/>
    </ligand>
</feature>
<feature type="binding site" evidence="3">
    <location>
        <position position="4999"/>
    </location>
    <ligand>
        <name>Ca(2+)</name>
        <dbReference type="ChEBI" id="CHEBI:29108"/>
    </ligand>
</feature>
<feature type="modified residue" description="Phosphoserine" evidence="15">
    <location>
        <position position="1338"/>
    </location>
</feature>
<feature type="modified residue" description="Phosphoserine" evidence="14">
    <location>
        <position position="2344"/>
    </location>
</feature>
<feature type="modified residue" description="Phosphoserine" evidence="15">
    <location>
        <position position="2840"/>
    </location>
</feature>
<feature type="modified residue" description="S-nitrosocysteine" evidence="3">
    <location>
        <position position="3634"/>
    </location>
</feature>
<feature type="modified residue" description="Phosphothreonine" evidence="15">
    <location>
        <position position="4464"/>
    </location>
</feature>
<feature type="modified residue" description="Phosphoserine" evidence="15">
    <location>
        <position position="4468"/>
    </location>
</feature>
<feature type="modified residue" description="Phosphotyrosine" evidence="4">
    <location>
        <position position="4861"/>
    </location>
</feature>
<feature type="modified residue" description="Phosphoserine" evidence="4">
    <location>
        <position position="4864"/>
    </location>
</feature>
<feature type="sequence conflict" description="In Ref. 2; AAD48899." evidence="11" ref="2">
    <original>A</original>
    <variation>V</variation>
    <location>
        <position position="673"/>
    </location>
</feature>
<feature type="sequence conflict" description="In Ref. 3; AAD31270." evidence="11" ref="3">
    <original>D</original>
    <variation>H</variation>
    <location>
        <position position="4728"/>
    </location>
</feature>
<reference key="1">
    <citation type="journal article" date="2004" name="Nature">
        <title>Genome sequence of the Brown Norway rat yields insights into mammalian evolution.</title>
        <authorList>
            <person name="Gibbs R.A."/>
            <person name="Weinstock G.M."/>
            <person name="Metzker M.L."/>
            <person name="Muzny D.M."/>
            <person name="Sodergren E.J."/>
            <person name="Scherer S."/>
            <person name="Scott G."/>
            <person name="Steffen D."/>
            <person name="Worley K.C."/>
            <person name="Burch P.E."/>
            <person name="Okwuonu G."/>
            <person name="Hines S."/>
            <person name="Lewis L."/>
            <person name="Deramo C."/>
            <person name="Delgado O."/>
            <person name="Dugan-Rocha S."/>
            <person name="Miner G."/>
            <person name="Morgan M."/>
            <person name="Hawes A."/>
            <person name="Gill R."/>
            <person name="Holt R.A."/>
            <person name="Adams M.D."/>
            <person name="Amanatides P.G."/>
            <person name="Baden-Tillson H."/>
            <person name="Barnstead M."/>
            <person name="Chin S."/>
            <person name="Evans C.A."/>
            <person name="Ferriera S."/>
            <person name="Fosler C."/>
            <person name="Glodek A."/>
            <person name="Gu Z."/>
            <person name="Jennings D."/>
            <person name="Kraft C.L."/>
            <person name="Nguyen T."/>
            <person name="Pfannkoch C.M."/>
            <person name="Sitter C."/>
            <person name="Sutton G.G."/>
            <person name="Venter J.C."/>
            <person name="Woodage T."/>
            <person name="Smith D."/>
            <person name="Lee H.-M."/>
            <person name="Gustafson E."/>
            <person name="Cahill P."/>
            <person name="Kana A."/>
            <person name="Doucette-Stamm L."/>
            <person name="Weinstock K."/>
            <person name="Fechtel K."/>
            <person name="Weiss R.B."/>
            <person name="Dunn D.M."/>
            <person name="Green E.D."/>
            <person name="Blakesley R.W."/>
            <person name="Bouffard G.G."/>
            <person name="De Jong P.J."/>
            <person name="Osoegawa K."/>
            <person name="Zhu B."/>
            <person name="Marra M."/>
            <person name="Schein J."/>
            <person name="Bosdet I."/>
            <person name="Fjell C."/>
            <person name="Jones S."/>
            <person name="Krzywinski M."/>
            <person name="Mathewson C."/>
            <person name="Siddiqui A."/>
            <person name="Wye N."/>
            <person name="McPherson J."/>
            <person name="Zhao S."/>
            <person name="Fraser C.M."/>
            <person name="Shetty J."/>
            <person name="Shatsman S."/>
            <person name="Geer K."/>
            <person name="Chen Y."/>
            <person name="Abramzon S."/>
            <person name="Nierman W.C."/>
            <person name="Havlak P.H."/>
            <person name="Chen R."/>
            <person name="Durbin K.J."/>
            <person name="Egan A."/>
            <person name="Ren Y."/>
            <person name="Song X.-Z."/>
            <person name="Li B."/>
            <person name="Liu Y."/>
            <person name="Qin X."/>
            <person name="Cawley S."/>
            <person name="Cooney A.J."/>
            <person name="D'Souza L.M."/>
            <person name="Martin K."/>
            <person name="Wu J.Q."/>
            <person name="Gonzalez-Garay M.L."/>
            <person name="Jackson A.R."/>
            <person name="Kalafus K.J."/>
            <person name="McLeod M.P."/>
            <person name="Milosavljevic A."/>
            <person name="Virk D."/>
            <person name="Volkov A."/>
            <person name="Wheeler D.A."/>
            <person name="Zhang Z."/>
            <person name="Bailey J.A."/>
            <person name="Eichler E.E."/>
            <person name="Tuzun E."/>
            <person name="Birney E."/>
            <person name="Mongin E."/>
            <person name="Ureta-Vidal A."/>
            <person name="Woodwark C."/>
            <person name="Zdobnov E."/>
            <person name="Bork P."/>
            <person name="Suyama M."/>
            <person name="Torrents D."/>
            <person name="Alexandersson M."/>
            <person name="Trask B.J."/>
            <person name="Young J.M."/>
            <person name="Huang H."/>
            <person name="Wang H."/>
            <person name="Xing H."/>
            <person name="Daniels S."/>
            <person name="Gietzen D."/>
            <person name="Schmidt J."/>
            <person name="Stevens K."/>
            <person name="Vitt U."/>
            <person name="Wingrove J."/>
            <person name="Camara F."/>
            <person name="Mar Alba M."/>
            <person name="Abril J.F."/>
            <person name="Guigo R."/>
            <person name="Smit A."/>
            <person name="Dubchak I."/>
            <person name="Rubin E.M."/>
            <person name="Couronne O."/>
            <person name="Poliakov A."/>
            <person name="Huebner N."/>
            <person name="Ganten D."/>
            <person name="Goesele C."/>
            <person name="Hummel O."/>
            <person name="Kreitler T."/>
            <person name="Lee Y.-A."/>
            <person name="Monti J."/>
            <person name="Schulz H."/>
            <person name="Zimdahl H."/>
            <person name="Himmelbauer H."/>
            <person name="Lehrach H."/>
            <person name="Jacob H.J."/>
            <person name="Bromberg S."/>
            <person name="Gullings-Handley J."/>
            <person name="Jensen-Seaman M.I."/>
            <person name="Kwitek A.E."/>
            <person name="Lazar J."/>
            <person name="Pasko D."/>
            <person name="Tonellato P.J."/>
            <person name="Twigger S."/>
            <person name="Ponting C.P."/>
            <person name="Duarte J.M."/>
            <person name="Rice S."/>
            <person name="Goodstadt L."/>
            <person name="Beatson S.A."/>
            <person name="Emes R.D."/>
            <person name="Winter E.E."/>
            <person name="Webber C."/>
            <person name="Brandt P."/>
            <person name="Nyakatura G."/>
            <person name="Adetobi M."/>
            <person name="Chiaromonte F."/>
            <person name="Elnitski L."/>
            <person name="Eswara P."/>
            <person name="Hardison R.C."/>
            <person name="Hou M."/>
            <person name="Kolbe D."/>
            <person name="Makova K."/>
            <person name="Miller W."/>
            <person name="Nekrutenko A."/>
            <person name="Riemer C."/>
            <person name="Schwartz S."/>
            <person name="Taylor J."/>
            <person name="Yang S."/>
            <person name="Zhang Y."/>
            <person name="Lindpaintner K."/>
            <person name="Andrews T.D."/>
            <person name="Caccamo M."/>
            <person name="Clamp M."/>
            <person name="Clarke L."/>
            <person name="Curwen V."/>
            <person name="Durbin R.M."/>
            <person name="Eyras E."/>
            <person name="Searle S.M."/>
            <person name="Cooper G.M."/>
            <person name="Batzoglou S."/>
            <person name="Brudno M."/>
            <person name="Sidow A."/>
            <person name="Stone E.A."/>
            <person name="Payseur B.A."/>
            <person name="Bourque G."/>
            <person name="Lopez-Otin C."/>
            <person name="Puente X.S."/>
            <person name="Chakrabarti K."/>
            <person name="Chatterji S."/>
            <person name="Dewey C."/>
            <person name="Pachter L."/>
            <person name="Bray N."/>
            <person name="Yap V.B."/>
            <person name="Caspi A."/>
            <person name="Tesler G."/>
            <person name="Pevzner P.A."/>
            <person name="Haussler D."/>
            <person name="Roskin K.M."/>
            <person name="Baertsch R."/>
            <person name="Clawson H."/>
            <person name="Furey T.S."/>
            <person name="Hinrichs A.S."/>
            <person name="Karolchik D."/>
            <person name="Kent W.J."/>
            <person name="Rosenbloom K.R."/>
            <person name="Trumbower H."/>
            <person name="Weirauch M."/>
            <person name="Cooper D.N."/>
            <person name="Stenson P.D."/>
            <person name="Ma B."/>
            <person name="Brent M."/>
            <person name="Arumugam M."/>
            <person name="Shteynberg D."/>
            <person name="Copley R.R."/>
            <person name="Taylor M.S."/>
            <person name="Riethman H."/>
            <person name="Mudunuri U."/>
            <person name="Peterson J."/>
            <person name="Guyer M."/>
            <person name="Felsenfeld A."/>
            <person name="Old S."/>
            <person name="Mockrin S."/>
            <person name="Collins F.S."/>
        </authorList>
    </citation>
    <scope>NUCLEOTIDE SEQUENCE [LARGE SCALE GENOMIC DNA]</scope>
    <source>
        <strain>Brown Norway</strain>
    </source>
</reference>
<reference key="2">
    <citation type="journal article" date="1999" name="Am. J. Physiol.">
        <title>Pregnant rat myometrial cells show heterogeneous ryanodine- and caffeine-sensitive calcium stores.</title>
        <authorList>
            <person name="Martin C."/>
            <person name="Hyvelin J.-M."/>
            <person name="Chapman K.E."/>
            <person name="Marthan R."/>
            <person name="Ashley R.H."/>
            <person name="Savineau J.P."/>
        </authorList>
    </citation>
    <scope>NUCLEOTIDE SEQUENCE [MRNA] OF 523-677</scope>
    <scope>TISSUE SPECIFICITY</scope>
    <source>
        <tissue>Skeletal muscle</tissue>
    </source>
</reference>
<reference key="3">
    <citation type="submission" date="1999-02" db="EMBL/GenBank/DDBJ databases">
        <title>Changes in ryanodine and inositol trisphosphate receptor expression in cultured rat cortical glia.</title>
        <authorList>
            <person name="Brickley K."/>
            <person name="Mathie A."/>
            <person name="Lai F.A."/>
            <person name="Pearce B."/>
        </authorList>
    </citation>
    <scope>NUCLEOTIDE SEQUENCE [MRNA] OF 4712-4960</scope>
    <source>
        <strain>Wistar</strain>
    </source>
</reference>
<reference key="4">
    <citation type="submission" date="1997-07" db="EMBL/GenBank/DDBJ databases">
        <title>Expression of ryanodine receptors in rat enamel epithelium.</title>
        <authorList>
            <person name="Scott L.M."/>
            <person name="Demmer J."/>
            <person name="Hubbard M.J."/>
        </authorList>
    </citation>
    <scope>NUCLEOTIDE SEQUENCE [MRNA] OF 4863-4951</scope>
    <source>
        <strain>Wistar</strain>
    </source>
</reference>
<reference key="5">
    <citation type="journal article" date="2001" name="Pflugers Arch.">
        <title>Altered inhibition of the rat skeletal ryanodine receptor/calcium release channel by magnesium in the presence of ATP.</title>
        <authorList>
            <person name="Jona I."/>
            <person name="Szegedi C."/>
            <person name="Sarkoezi S."/>
            <person name="Szentesi P."/>
            <person name="Csernoch L."/>
            <person name="Kovacs L."/>
        </authorList>
    </citation>
    <scope>FUNCTION</scope>
    <scope>TRANSPORTER ACTIVITY</scope>
    <scope>ACTIVITY REGULATION</scope>
    <scope>SUBCELLULAR LOCATION</scope>
    <scope>TISSUE SPECIFICITY</scope>
</reference>
<reference key="6">
    <citation type="journal article" date="2006" name="Proc. Natl. Acad. Sci. U.S.A.">
        <title>Quantitative phosphoproteomics of vasopressin-sensitive renal cells: regulation of aquaporin-2 phosphorylation at two sites.</title>
        <authorList>
            <person name="Hoffert J.D."/>
            <person name="Pisitkun T."/>
            <person name="Wang G."/>
            <person name="Shen R.-F."/>
            <person name="Knepper M.A."/>
        </authorList>
    </citation>
    <scope>PHOSPHORYLATION [LARGE SCALE ANALYSIS] AT SER-2344</scope>
    <scope>IDENTIFICATION BY MASS SPECTROMETRY [LARGE SCALE ANALYSIS]</scope>
</reference>
<reference key="7">
    <citation type="journal article" date="2012" name="Nat. Commun.">
        <title>Quantitative maps of protein phosphorylation sites across 14 different rat organs and tissues.</title>
        <authorList>
            <person name="Lundby A."/>
            <person name="Secher A."/>
            <person name="Lage K."/>
            <person name="Nordsborg N.B."/>
            <person name="Dmytriyev A."/>
            <person name="Lundby C."/>
            <person name="Olsen J.V."/>
        </authorList>
    </citation>
    <scope>PHOSPHORYLATION [LARGE SCALE ANALYSIS] AT SER-1338; SER-2840; THR-4464 AND SER-4468</scope>
    <scope>IDENTIFICATION BY MASS SPECTROMETRY [LARGE SCALE ANALYSIS]</scope>
</reference>
<name>RYR1_RAT</name>
<sequence length="5035" mass="565483">MGDGGGEGEDEVQFLRTDDEVVLQCSATVLKEQLKLCLAAEGFGNRLCFLEPTSNAQNVPPDLAICCFILEQSLSVRALQEMLANTVEAGVESSQGGGHRTLLYGHAILLRHAHSRMYLSCLTTSRSMTDKLAFDVGLQEDATGEACWWTMHPASKQRSEGEKVRVGDDLILVSVSSERYLHLSTASGELQVDASFMQTLWNMNPICSCCEEGFVTGGHVLRLFHGHMDECLTISPSDSDDQRRLVYYEGGPVCTHARSLWRLEPLRISWSGSHLRWGQPLRIRHVTTGRYLALTEDQGLVVVDASKAHTKATSFCFRISKEKLDVAPKRDVEGMGPPEIKYGESLCFVQHVASGLWLTYAAPDPKALRLGVLKKKAMLHQEGHMDDALSLTRCQQEESQAARMIYSTAGLYNQFIKGLDSFSGKPRGSGPPAGSALPIEGVILSLQDLIGYFEPPSEELQHEEKQTKLRSLRNRQSLFQEEGMLSLVLNCIDRLNVYTTAAHFAEFAGEEAAESWKEIVNLLYELLASLIRGNRTNCALFSTNLDWLVSKLDRLEASSGILEVLYCVLIESPEVLNIIQENHIKSIISLLDKHGRNHKVLDVLCSLCVCNGVAVRSNQDLITENLLPGRELLLQTNLINYVTSIRPNIFVGRAEGSTQYGKWYFEVMVDEVAPFLTAQATHLRVGWALSEGYSPYPGGGEGWGGNGVGDDLYSYGFDGLHLWTGHVARPVTSPGQHLLGPEDVVSCCLDLSVPSISFRINGCPVQGVFESFNLDGLFFPVVSFSAGIKVRFLLGGRHGEFKFLPPPGYAPCHEAVLPRERLHLQPIKEYRREGPRGPHLVGPSRCLSHLDFVPCPVDTIQIVLPPHLERIREKLAENIHELWALTRIEQGWTYGPVRDDNKRLHPCLVDFHSLPEPERNYNLQMSGETLKTLLALGCHVGMADEKAEDNLKKTKLPKTYMMNNGYKPAPLDLSHVRLTPAQTTLVDRLAENGHNVWARDRVAQGWSYSAVQDIPARRNPRLVPYRLLDEATKRSNRDSLCQAVRTLLGYGYNIEPPDQEPSQVDSQSRGDRARIFRAEKSYAVQSGRWYFEFEAVTTGRELGWARPELRPDVELGADDLAYVFNGHRGQRWHLGSEPFGRPWQSGDVVGCMIDLTENTIIFTLNGEVLMSDSGSETAFREIEIGDGFLPVCSLGPGQVGHLNLGQDVSSLRFFAICGLQEGFEPFAINMQRPVTTWFSKSLPQFEPVPLEHPHYEVARMDGTVDTPPCLRLTHRTWGSQNSLVEMLFLRLSLPVQFHQHFRCTAGATPLASPGLQPPAEDEARAAEPDTDYENLRRSAGGWGEAEAGKDGTAKEGTPGGAAQPGVEAQPARAENEKDATTEKNKKRGFLFKAKKVAMMTQPPSTPALPRLPRDVVPADNRDDPEIILNTTTYYYSVRVFAGQEPSCVWVGWVTPDYHQHDMSFDLSKVRAVTVTMGDEQGNVHSSLKCSNCYMVWGGDFVSPGQQGRISHTDLVIGCLVDLATGLMTFTANGKESNTFFQVEPNTKLFPAVFVLPTHQNVVQFDLRPGANIMPLSAAMFLSERKNPAPQCPPRLEVQMLMPVSWSRMPNHFLHVDTRRAGERLGWAVQCQEPLMMMALHIPEENSEPYIHLKRAQLDPRDLRDYRDTKFDSESSDSDQTPQPGCYHVDQAQLLHALEDAHLPGPLRAGYYDLLISIHLESACRSRRSMLSEYIVPLTEETRAITLFPPGRSAEDGPRRHGLPGVGVTTSLRPPHHFSPPCFVVALPAAGAAEAPARLSPAIPLEALRDKALRMLGEAVRDGGQHARDPVGGSVEFQFVPVLKLVSTLLVMGVFSDEDVKQILKMIEPEVFTEEEEVEEEEEEEEEDEEEKEEDEEEEAHEKEDEEKEEAEEAAEEEKEELEEGLLQMKLPESVKLQMCHLLEYFCDQELQHRVESLAAFAERYVDKLQSNQRGRYGLLMKAFTMSAAETARRTREFRSPPQEQINMLLQFKNGADEEDCPLPEEIREDLVNFHQDLLAHCGIQLEGEEEEPEEESTLGSRLMSLLEKVRLVKKKEEKPEEEPAAEEHKPQSLQELVSHTVVRWAQEDFVQSPELVRAMFSLLHRQYDGLGELLRALPRAYTISLSSVEDTMSLLECLGQIRSLLIVQMGPQEENLMIQSIGNIMNNKVFYQHPNLMRALGMHETVMEVMVNVLGGGESKEIRFPKMVTSCCRFLCYFCRISRQNQRSMFDHLSYLLENSGIGLGMQGSTPLDVAAASVIDNNELALALQEQDLEKVVSYLAGCGLQSCPMLLAKGYPDIGWNPCGGERYLDFLRFAVFVNGESVEENANVVVRLLIRKPECFGPALRGEGGSGLLAAIEEAIRISEDPARDGPGVRRDRRREHFGEEPPEENRVHLGHAIMSFYAALIDLLGRCAPEMHLIQAGKGEALRIRAILRSLVPLDDLVGIISLPLQIPTLGKDGALVQPKMSASFVPDHKASMVLFLDRVYGIENQDFLLHVLDVGFLPDMRAAASLDTATFSRRWALALTRYLCAVLPLITKCAPLLRGTEHRAIMVDSMLHTVYRLSRGRSLTKAQRDVIEDCLMALCRYIRPSMLQHLLRRLVFDVPILNEFAKMPLKLLTNHYERCWKYYCLPTGWANFGVTSEEELHLTRKLFWGIFDSLAHKKYDQELYRIAMPCLCAIAGALPPDYVDASYSSKTEKKATVDAEGNFDPRPVETLNVIIPEKLDSFINKFAEYAHEKWAFDKIQNNWSYGENIDEELKTHPMLRPYKTFSEKDKEIYRWPIKESLKAMIAWEWTVEKAREGEEEKTEKKKTRKISQTAQTYDPREGYNPQPPDLSVVTLSRELQAMAEQLAENYHNTWGRKKKQELEAKGGGSHPLLVPYDTLTAKEKARDREKAQELLKFLQMNGYAVTRHGKDMELDTSSIEKRFAFGFLQQLLRWMDISQEFIAHLEAVVSSGRVEKSPHEQEIKFFAKILLPLINQYFTNHCLYFLSTPAKVLGSGGHASNKEKEMITSLFCKLAALVRHRVSLFGTDAPAVVNCLHILARSLDARTVMKSGPEIVKAGLRSFFESASEDIEKMVENLRLGKVSQARTQVKGVGQNLTYTTVALLPVLTTLFQHIAQHQFGDDVILDDVQVSCYRTLCSIYSLGTTRNPYVEKLRPALGECLARLAAAMPVAFLEPELNEYNACSVYTTKSPRERAILGLPNSVEEMCPDIPVLERLMAEIGGLAESGARYTEMPHVIEITLPMLCSYLPRWWERGPEAPPPALPAGAPPPCTAVTSDHLNSLLGNILRIIVNNLGIDEASWMKRLAVFAQPIVSRARPELLRSHFIPTIGRLRKRAGKVVAEEEQLRLEAKAEAEEGELLVRDEFSVLCRDLYALYPLLIRYVDNNRSAWPRLPPSPSSSFSLPSPSELGRWLMKDHGHQLYEESFTVPLILDNAAFPLARNQSRAIGCAGVVRSGGSDQERTKKKRRGDRYSVQTSLIVATLKKMLPIGLNMCAPTDQDLIVLAKARYALKDTDEEVREFLQNNLNLQGKVEGSPSLRWQMALYRGVPGREEDADDPEKIVRRVQEVSAVLYHLDQTEHPYKSKKAVWHKLLSKQRRRAVVACFRMTPLYNLPTHRACNMFLESYKASWILTEDHSFEDRMIDDLSKAGEQEEEEEEVEEKKPDPLHQLVLHFSRTALTEKSKLDEDYLYMAYADIMAKSCHLEEGGENVEEGGEEEEVEVSFEEKEMEKQRLLYQQSRLHNRGAAEMVLQMISACKGETGAMVSSTLKLGISILNGGNAEVQQKMLDYLKDKKEVGFFQSIQALMQTCRWPHKTLSQREGQEERVMKVQTSGTLVIINRQNGEKVMADDEFTQDLFRFLQLLCEGHNNDFQNYLRTQTGNTTTINIIICTVDYLLRLQESISDFYWYYSGKDVIEEQGKRNFSKAMSVAKQVFNSLTEYIQGPCTGNQQSLAHSRLWDAVVGFLHVFAHMMMKLAQDSSQIELLKELLDLQKDMVVMLLSLLEGNVVNGMIARQMVDMLVESSSNVEMILKFFDMFLKLKDIVGSEAFQDYVTDPRGLISKKDFQKAMDSQKQFTGPEIQFLLSCSEADENEMINCEEFANRFQEPARDIGFNVAVLLTNLSEHVPHDPRLRNFLELAESILDYFRPYLGRIEIMGASRRIERIYFEISETNRAQWEMPQVKESKRQFIFDVVNEGGESEKMELFVSFCEDTIFEMQIAAQISEPEGEPEEDDDEGAEEAEEGAAGPDGSGSAAAAGVWTWLATAAGRTLRGLSYRSLRRRVRRLRRLTAREAATAVAVLLWAMVARAGGAGAGAAAGVLRLLWGSLFGGGLVDSAKKVTVTELLAGMPDPTGDEVHGQQPSGAGSDAEGEGQGEGEGDAAEGVGDEEVAADQAGTGGADRTVAVADGSPFRPEGAGGLGDMGDTTPVEPPTPEGSPILKRKLGVDGEEEEPQPEPEPEPEPEPEKADTENGEKEVPEPPPEPPKKAPPPPPPKKEEAGGAGLEEFWGELEVQRVKFLNYLSRNFYTLRFLALFLAFAINFILLFYKVSDSPPGEDDIEGSGAGDMSGAGSGDGSGWGSRASEEVEGDEDENMVYYFLEESTGYMEPALRCLSLLHTLVAFLCIIGYNCLKVPLVIFKREKELARKLEFDGLYITEQPEDDDVKGQWDRLVLNTPSFPSNYWDKFVKRKVLDKHGDIFGRERIAELLGMDLASLEITAHNERKPDPPPGLLTWIMSIDVKYQIWKFGVIFTDNSFLYLGWYMVMSLLGHYNNFFFAAHLLDIAMGVKTLRTILSSVTHNGKQLVMTVGLLAVVVYLYTVVAFNFFRKFYNKSEDEDEPDMKCDDMMTCYLFHMYVGVRAGGGIGDEIEDPAGDEYELYRVVFDITFFFFVIVILLAIIQGLIIDAFGELRDQQEQVKEDMETKCFICGIGSDYFDTTPHGFETHTLEEHNLANYMFFLMYLINKDETEHTGQESYVWKMYQERCWDFFPAGDCFRKQYEDQLG</sequence>
<gene>
    <name evidence="13" type="primary">Ryr1</name>
</gene>